<sequence>MARVKRGVVAHRRHKKILARAKGYYGARSRVYRVAFQAVIKAGQYAYRDRRQKKRQFRALWIARINAGARQNGLSYSRMIDGLKKAQVIIDRRVLADIAMHDAVAFAALAEKAKGALAA</sequence>
<gene>
    <name evidence="1" type="primary">rplT</name>
    <name type="ordered locus">AB57_0701</name>
</gene>
<protein>
    <recommendedName>
        <fullName evidence="1">Large ribosomal subunit protein bL20</fullName>
    </recommendedName>
    <alternativeName>
        <fullName evidence="2">50S ribosomal protein L20</fullName>
    </alternativeName>
</protein>
<organism>
    <name type="scientific">Acinetobacter baumannii (strain AB0057)</name>
    <dbReference type="NCBI Taxonomy" id="480119"/>
    <lineage>
        <taxon>Bacteria</taxon>
        <taxon>Pseudomonadati</taxon>
        <taxon>Pseudomonadota</taxon>
        <taxon>Gammaproteobacteria</taxon>
        <taxon>Moraxellales</taxon>
        <taxon>Moraxellaceae</taxon>
        <taxon>Acinetobacter</taxon>
        <taxon>Acinetobacter calcoaceticus/baumannii complex</taxon>
    </lineage>
</organism>
<accession>B7I694</accession>
<evidence type="ECO:0000255" key="1">
    <source>
        <dbReference type="HAMAP-Rule" id="MF_00382"/>
    </source>
</evidence>
<evidence type="ECO:0000305" key="2"/>
<evidence type="ECO:0007829" key="3">
    <source>
        <dbReference type="PDB" id="7M4V"/>
    </source>
</evidence>
<name>RL20_ACIB5</name>
<dbReference type="EMBL" id="CP001182">
    <property type="protein sequence ID" value="ACJ40121.1"/>
    <property type="molecule type" value="Genomic_DNA"/>
</dbReference>
<dbReference type="RefSeq" id="WP_000124858.1">
    <property type="nucleotide sequence ID" value="NC_011586.2"/>
</dbReference>
<dbReference type="PDB" id="7M4V">
    <property type="method" value="EM"/>
    <property type="resolution" value="2.54 A"/>
    <property type="chains" value="P=1-119"/>
</dbReference>
<dbReference type="PDBsum" id="7M4V"/>
<dbReference type="SMR" id="B7I694"/>
<dbReference type="IntAct" id="B7I694">
    <property type="interactions" value="2"/>
</dbReference>
<dbReference type="GeneID" id="9383733"/>
<dbReference type="KEGG" id="abn:AB57_0701"/>
<dbReference type="HOGENOM" id="CLU_123265_0_1_6"/>
<dbReference type="Proteomes" id="UP000007094">
    <property type="component" value="Chromosome"/>
</dbReference>
<dbReference type="GO" id="GO:1990904">
    <property type="term" value="C:ribonucleoprotein complex"/>
    <property type="evidence" value="ECO:0007669"/>
    <property type="project" value="UniProtKB-KW"/>
</dbReference>
<dbReference type="GO" id="GO:0005840">
    <property type="term" value="C:ribosome"/>
    <property type="evidence" value="ECO:0007669"/>
    <property type="project" value="UniProtKB-KW"/>
</dbReference>
<dbReference type="GO" id="GO:0019843">
    <property type="term" value="F:rRNA binding"/>
    <property type="evidence" value="ECO:0007669"/>
    <property type="project" value="UniProtKB-UniRule"/>
</dbReference>
<dbReference type="GO" id="GO:0003735">
    <property type="term" value="F:structural constituent of ribosome"/>
    <property type="evidence" value="ECO:0007669"/>
    <property type="project" value="InterPro"/>
</dbReference>
<dbReference type="GO" id="GO:0000027">
    <property type="term" value="P:ribosomal large subunit assembly"/>
    <property type="evidence" value="ECO:0007669"/>
    <property type="project" value="UniProtKB-UniRule"/>
</dbReference>
<dbReference type="GO" id="GO:0006412">
    <property type="term" value="P:translation"/>
    <property type="evidence" value="ECO:0007669"/>
    <property type="project" value="InterPro"/>
</dbReference>
<dbReference type="CDD" id="cd07026">
    <property type="entry name" value="Ribosomal_L20"/>
    <property type="match status" value="1"/>
</dbReference>
<dbReference type="FunFam" id="1.10.1900.20:FF:000001">
    <property type="entry name" value="50S ribosomal protein L20"/>
    <property type="match status" value="1"/>
</dbReference>
<dbReference type="Gene3D" id="6.10.160.10">
    <property type="match status" value="1"/>
</dbReference>
<dbReference type="Gene3D" id="1.10.1900.20">
    <property type="entry name" value="Ribosomal protein L20"/>
    <property type="match status" value="1"/>
</dbReference>
<dbReference type="HAMAP" id="MF_00382">
    <property type="entry name" value="Ribosomal_bL20"/>
    <property type="match status" value="1"/>
</dbReference>
<dbReference type="InterPro" id="IPR005813">
    <property type="entry name" value="Ribosomal_bL20"/>
</dbReference>
<dbReference type="InterPro" id="IPR049946">
    <property type="entry name" value="RIBOSOMAL_L20_CS"/>
</dbReference>
<dbReference type="InterPro" id="IPR035566">
    <property type="entry name" value="Ribosomal_protein_bL20_C"/>
</dbReference>
<dbReference type="NCBIfam" id="TIGR01032">
    <property type="entry name" value="rplT_bact"/>
    <property type="match status" value="1"/>
</dbReference>
<dbReference type="PANTHER" id="PTHR10986">
    <property type="entry name" value="39S RIBOSOMAL PROTEIN L20"/>
    <property type="match status" value="1"/>
</dbReference>
<dbReference type="Pfam" id="PF00453">
    <property type="entry name" value="Ribosomal_L20"/>
    <property type="match status" value="1"/>
</dbReference>
<dbReference type="PRINTS" id="PR00062">
    <property type="entry name" value="RIBOSOMALL20"/>
</dbReference>
<dbReference type="SUPFAM" id="SSF74731">
    <property type="entry name" value="Ribosomal protein L20"/>
    <property type="match status" value="1"/>
</dbReference>
<dbReference type="PROSITE" id="PS00937">
    <property type="entry name" value="RIBOSOMAL_L20"/>
    <property type="match status" value="1"/>
</dbReference>
<reference key="1">
    <citation type="journal article" date="2008" name="J. Bacteriol.">
        <title>Comparative genome sequence analysis of multidrug-resistant Acinetobacter baumannii.</title>
        <authorList>
            <person name="Adams M.D."/>
            <person name="Goglin K."/>
            <person name="Molyneaux N."/>
            <person name="Hujer K.M."/>
            <person name="Lavender H."/>
            <person name="Jamison J.J."/>
            <person name="MacDonald I.J."/>
            <person name="Martin K.M."/>
            <person name="Russo T."/>
            <person name="Campagnari A.A."/>
            <person name="Hujer A.M."/>
            <person name="Bonomo R.A."/>
            <person name="Gill S.R."/>
        </authorList>
    </citation>
    <scope>NUCLEOTIDE SEQUENCE [LARGE SCALE GENOMIC DNA]</scope>
    <source>
        <strain>AB0057</strain>
    </source>
</reference>
<comment type="function">
    <text evidence="1">Binds directly to 23S ribosomal RNA and is necessary for the in vitro assembly process of the 50S ribosomal subunit. It is not involved in the protein synthesizing functions of that subunit.</text>
</comment>
<comment type="similarity">
    <text evidence="1">Belongs to the bacterial ribosomal protein bL20 family.</text>
</comment>
<keyword id="KW-0002">3D-structure</keyword>
<keyword id="KW-0687">Ribonucleoprotein</keyword>
<keyword id="KW-0689">Ribosomal protein</keyword>
<keyword id="KW-0694">RNA-binding</keyword>
<keyword id="KW-0699">rRNA-binding</keyword>
<proteinExistence type="evidence at protein level"/>
<feature type="chain" id="PRO_1000122256" description="Large ribosomal subunit protein bL20">
    <location>
        <begin position="1"/>
        <end position="119"/>
    </location>
</feature>
<feature type="helix" evidence="3">
    <location>
        <begin position="7"/>
        <end position="20"/>
    </location>
</feature>
<feature type="turn" evidence="3">
    <location>
        <begin position="21"/>
        <end position="23"/>
    </location>
</feature>
<feature type="helix" evidence="3">
    <location>
        <begin position="26"/>
        <end position="29"/>
    </location>
</feature>
<feature type="helix" evidence="3">
    <location>
        <begin position="32"/>
        <end position="71"/>
    </location>
</feature>
<feature type="helix" evidence="3">
    <location>
        <begin position="76"/>
        <end position="86"/>
    </location>
</feature>
<feature type="helix" evidence="3">
    <location>
        <begin position="92"/>
        <end position="101"/>
    </location>
</feature>
<feature type="helix" evidence="3">
    <location>
        <begin position="103"/>
        <end position="117"/>
    </location>
</feature>